<reference key="1">
    <citation type="submission" date="2006-09" db="EMBL/GenBank/DDBJ databases">
        <title>NISC comparative sequencing initiative.</title>
        <authorList>
            <person name="Antonellis A."/>
            <person name="Ayele K."/>
            <person name="Benjamin B."/>
            <person name="Blakesley R.W."/>
            <person name="Boakye A."/>
            <person name="Bouffard G.G."/>
            <person name="Brinkley C."/>
            <person name="Brooks S."/>
            <person name="Chu G."/>
            <person name="Coleman H."/>
            <person name="Engle J."/>
            <person name="Gestole M."/>
            <person name="Greene A."/>
            <person name="Guan X."/>
            <person name="Gupta J."/>
            <person name="Haghighi P."/>
            <person name="Han J."/>
            <person name="Hansen N."/>
            <person name="Ho S.-L."/>
            <person name="Hu P."/>
            <person name="Hunter G."/>
            <person name="Hurle B."/>
            <person name="Idol J.R."/>
            <person name="Kwong P."/>
            <person name="Laric P."/>
            <person name="Larson S."/>
            <person name="Lee-Lin S.-Q."/>
            <person name="Legaspi R."/>
            <person name="Madden M."/>
            <person name="Maduro Q.L."/>
            <person name="Maduro V.B."/>
            <person name="Margulies E.H."/>
            <person name="Masiello C."/>
            <person name="Maskeri B."/>
            <person name="McDowell J."/>
            <person name="Mojidi H.A."/>
            <person name="Mullikin J.C."/>
            <person name="Oestreicher J.S."/>
            <person name="Park M."/>
            <person name="Portnoy M.E."/>
            <person name="Prasad A."/>
            <person name="Puri O."/>
            <person name="Reddix-Dugue N."/>
            <person name="Schandler K."/>
            <person name="Schueler M.G."/>
            <person name="Sison C."/>
            <person name="Stantripop S."/>
            <person name="Stephen E."/>
            <person name="Taye A."/>
            <person name="Thomas J.W."/>
            <person name="Thomas P.J."/>
            <person name="Tsipouri V."/>
            <person name="Ung L."/>
            <person name="Vogt J.L."/>
            <person name="Wetherby K.D."/>
            <person name="Young A."/>
            <person name="Green E.D."/>
        </authorList>
    </citation>
    <scope>NUCLEOTIDE SEQUENCE [LARGE SCALE GENOMIC DNA]</scope>
</reference>
<proteinExistence type="inferred from homology"/>
<name>ST7_COLGU</name>
<feature type="chain" id="PRO_0000339197" description="Suppressor of tumorigenicity 7 protein">
    <location>
        <begin position="1"/>
        <end position="585"/>
    </location>
</feature>
<feature type="transmembrane region" description="Helical" evidence="2">
    <location>
        <begin position="15"/>
        <end position="35"/>
    </location>
</feature>
<feature type="transmembrane region" description="Helical" evidence="2">
    <location>
        <begin position="62"/>
        <end position="82"/>
    </location>
</feature>
<feature type="transmembrane region" description="Helical" evidence="2">
    <location>
        <begin position="512"/>
        <end position="532"/>
    </location>
</feature>
<feature type="modified residue" description="Phosphoserine" evidence="1">
    <location>
        <position position="386"/>
    </location>
</feature>
<feature type="glycosylation site" description="N-linked (GlcNAc...) asparagine" evidence="2">
    <location>
        <position position="47"/>
    </location>
</feature>
<comment type="subcellular location">
    <subcellularLocation>
        <location evidence="3">Membrane</location>
        <topology evidence="3">Multi-pass membrane protein</topology>
    </subcellularLocation>
</comment>
<comment type="similarity">
    <text evidence="3">Belongs to the ST7 family.</text>
</comment>
<sequence length="585" mass="67140">MAEAATGFLEQLKSCIVWSWTYLWTVWFFIVLFLVYILRVPLKINDNLSTVSMFLNTLTPKFYVALTGTSSLISGLILIFEWWYFRKYGTSFIEQVSVSHLRPLLGGVDNNSSNNSNSSNGDSDSNRQSVSECKVWRNPLNLFRGAEYNRYTWVTGREPLTYYDMNLSAQDHQTFFTCDSDHLRPADAIMQKAWRERNPQARISAAHEALEINEIRSRVEVPLIASSTIWEIKLLPKCATAYILLAEEEATTIAEAEKLFKQALKAGDGCYRRSQQLQHHGSQYEAQHRRDTNVLVYIKRRLAMCARRLGRTREAVKMMRDLMKEFPLLSMFNIHENLLEALLELQAYADVQAVLAKYDDISLPKSATICYTAALLKARAVSDKFSPEAASRRGLSTAEMNAVEAIHRAVEFNPHVPKYLLEMKSLILPPEHILKRGDSEAIAYAFFHLAHWKRVEGALNLLHCTWEGTFRMIPYPLEKGHLFYPYPICTETADRELLPSFHEVSVYPKKELPFFILFTAGLCSFTAMLALLTHQFPELMGVFAKAMSDIFCSAEFRDWNCKSIFMRVEDELEIPPAPQSQHFQN</sequence>
<keyword id="KW-0325">Glycoprotein</keyword>
<keyword id="KW-0472">Membrane</keyword>
<keyword id="KW-0597">Phosphoprotein</keyword>
<keyword id="KW-0812">Transmembrane</keyword>
<keyword id="KW-1133">Transmembrane helix</keyword>
<evidence type="ECO:0000250" key="1">
    <source>
        <dbReference type="UniProtKB" id="Q9NRC1"/>
    </source>
</evidence>
<evidence type="ECO:0000255" key="2"/>
<evidence type="ECO:0000305" key="3"/>
<accession>Q07DY8</accession>
<gene>
    <name type="primary">ST7</name>
</gene>
<dbReference type="EMBL" id="DP000193">
    <property type="protein sequence ID" value="ABJ08854.1"/>
    <property type="molecule type" value="Genomic_DNA"/>
</dbReference>
<dbReference type="GlyCosmos" id="Q07DY8">
    <property type="glycosylation" value="1 site, No reported glycans"/>
</dbReference>
<dbReference type="GO" id="GO:0016020">
    <property type="term" value="C:membrane"/>
    <property type="evidence" value="ECO:0007669"/>
    <property type="project" value="UniProtKB-SubCell"/>
</dbReference>
<dbReference type="CDD" id="cd11557">
    <property type="entry name" value="ST7"/>
    <property type="match status" value="1"/>
</dbReference>
<dbReference type="InterPro" id="IPR007311">
    <property type="entry name" value="ST7"/>
</dbReference>
<dbReference type="PANTHER" id="PTHR12745">
    <property type="entry name" value="SUPPRESSION OF TUMORIGENICITY 7"/>
    <property type="match status" value="1"/>
</dbReference>
<dbReference type="PANTHER" id="PTHR12745:SF10">
    <property type="entry name" value="SUPPRESSOR OF TUMORIGENICITY 7 PROTEIN"/>
    <property type="match status" value="1"/>
</dbReference>
<dbReference type="Pfam" id="PF04184">
    <property type="entry name" value="ST7"/>
    <property type="match status" value="1"/>
</dbReference>
<organism>
    <name type="scientific">Colobus guereza</name>
    <name type="common">Mantled guereza</name>
    <name type="synonym">Eastern black-and-white colobus monkey</name>
    <dbReference type="NCBI Taxonomy" id="33548"/>
    <lineage>
        <taxon>Eukaryota</taxon>
        <taxon>Metazoa</taxon>
        <taxon>Chordata</taxon>
        <taxon>Craniata</taxon>
        <taxon>Vertebrata</taxon>
        <taxon>Euteleostomi</taxon>
        <taxon>Mammalia</taxon>
        <taxon>Eutheria</taxon>
        <taxon>Euarchontoglires</taxon>
        <taxon>Primates</taxon>
        <taxon>Haplorrhini</taxon>
        <taxon>Catarrhini</taxon>
        <taxon>Cercopithecidae</taxon>
        <taxon>Colobinae</taxon>
        <taxon>Colobus</taxon>
    </lineage>
</organism>
<protein>
    <recommendedName>
        <fullName>Suppressor of tumorigenicity 7 protein</fullName>
    </recommendedName>
</protein>